<proteinExistence type="evidence at protein level"/>
<organism>
    <name type="scientific">Mus musculus</name>
    <name type="common">Mouse</name>
    <dbReference type="NCBI Taxonomy" id="10090"/>
    <lineage>
        <taxon>Eukaryota</taxon>
        <taxon>Metazoa</taxon>
        <taxon>Chordata</taxon>
        <taxon>Craniata</taxon>
        <taxon>Vertebrata</taxon>
        <taxon>Euteleostomi</taxon>
        <taxon>Mammalia</taxon>
        <taxon>Eutheria</taxon>
        <taxon>Euarchontoglires</taxon>
        <taxon>Glires</taxon>
        <taxon>Rodentia</taxon>
        <taxon>Myomorpha</taxon>
        <taxon>Muroidea</taxon>
        <taxon>Muridae</taxon>
        <taxon>Murinae</taxon>
        <taxon>Mus</taxon>
        <taxon>Mus</taxon>
    </lineage>
</organism>
<dbReference type="EC" id="3.1.3.9" evidence="5"/>
<dbReference type="EMBL" id="AY186239">
    <property type="protein sequence ID" value="AAO39164.1"/>
    <property type="molecule type" value="mRNA"/>
</dbReference>
<dbReference type="EMBL" id="AK165395">
    <property type="protein sequence ID" value="BAE38159.1"/>
    <property type="molecule type" value="mRNA"/>
</dbReference>
<dbReference type="EMBL" id="AL954730">
    <property type="status" value="NOT_ANNOTATED_CDS"/>
    <property type="molecule type" value="Genomic_DNA"/>
</dbReference>
<dbReference type="EMBL" id="BC069959">
    <property type="protein sequence ID" value="AAH69959.1"/>
    <property type="molecule type" value="mRNA"/>
</dbReference>
<dbReference type="CCDS" id="CCDS25491.1"/>
<dbReference type="RefSeq" id="NP_787949.2">
    <property type="nucleotide sequence ID" value="NM_175935.3"/>
</dbReference>
<dbReference type="SMR" id="Q6NSQ9"/>
<dbReference type="FunCoup" id="Q6NSQ9">
    <property type="interactions" value="1247"/>
</dbReference>
<dbReference type="STRING" id="10090.ENSMUSP00000077995"/>
<dbReference type="iPTMnet" id="Q6NSQ9"/>
<dbReference type="PhosphoSitePlus" id="Q6NSQ9"/>
<dbReference type="SwissPalm" id="Q6NSQ9"/>
<dbReference type="jPOST" id="Q6NSQ9"/>
<dbReference type="PaxDb" id="10090-ENSMUSP00000077995"/>
<dbReference type="PeptideAtlas" id="Q6NSQ9"/>
<dbReference type="ProteomicsDB" id="271628"/>
<dbReference type="Pumba" id="Q6NSQ9"/>
<dbReference type="Antibodypedia" id="59289">
    <property type="antibodies" value="78 antibodies from 18 providers"/>
</dbReference>
<dbReference type="DNASU" id="68401"/>
<dbReference type="Ensembl" id="ENSMUST00000070334.10">
    <property type="protein sequence ID" value="ENSMUSP00000064276.4"/>
    <property type="gene ID" value="ENSMUSG00000034793.16"/>
</dbReference>
<dbReference type="Ensembl" id="ENSMUST00000078975.8">
    <property type="protein sequence ID" value="ENSMUSP00000077995.8"/>
    <property type="gene ID" value="ENSMUSG00000034793.16"/>
</dbReference>
<dbReference type="GeneID" id="68401"/>
<dbReference type="KEGG" id="mmu:68401"/>
<dbReference type="UCSC" id="uc007lqt.2">
    <property type="organism name" value="mouse"/>
</dbReference>
<dbReference type="AGR" id="MGI:1915651"/>
<dbReference type="CTD" id="92579"/>
<dbReference type="MGI" id="MGI:1915651">
    <property type="gene designation" value="G6pc3"/>
</dbReference>
<dbReference type="VEuPathDB" id="HostDB:ENSMUSG00000034793"/>
<dbReference type="eggNOG" id="ENOG502QS5D">
    <property type="taxonomic scope" value="Eukaryota"/>
</dbReference>
<dbReference type="GeneTree" id="ENSGT00950000183150"/>
<dbReference type="HOGENOM" id="CLU_052517_0_0_1"/>
<dbReference type="InParanoid" id="Q6NSQ9"/>
<dbReference type="OMA" id="KKWCSRA"/>
<dbReference type="OrthoDB" id="6416209at2759"/>
<dbReference type="PhylomeDB" id="Q6NSQ9"/>
<dbReference type="TreeFam" id="TF324388"/>
<dbReference type="Reactome" id="R-MMU-70263">
    <property type="pathway name" value="Gluconeogenesis"/>
</dbReference>
<dbReference type="UniPathway" id="UPA00138"/>
<dbReference type="BioGRID-ORCS" id="68401">
    <property type="hits" value="2 hits in 76 CRISPR screens"/>
</dbReference>
<dbReference type="ChiTaRS" id="G6pc3">
    <property type="organism name" value="mouse"/>
</dbReference>
<dbReference type="PRO" id="PR:Q6NSQ9"/>
<dbReference type="Proteomes" id="UP000000589">
    <property type="component" value="Chromosome 11"/>
</dbReference>
<dbReference type="RNAct" id="Q6NSQ9">
    <property type="molecule type" value="protein"/>
</dbReference>
<dbReference type="Bgee" id="ENSMUSG00000034793">
    <property type="expression patterns" value="Expressed in choroid plexus of fourth ventricle and 238 other cell types or tissues"/>
</dbReference>
<dbReference type="GO" id="GO:0005783">
    <property type="term" value="C:endoplasmic reticulum"/>
    <property type="evidence" value="ECO:0000314"/>
    <property type="project" value="MGI"/>
</dbReference>
<dbReference type="GO" id="GO:0005789">
    <property type="term" value="C:endoplasmic reticulum membrane"/>
    <property type="evidence" value="ECO:0007669"/>
    <property type="project" value="UniProtKB-SubCell"/>
</dbReference>
<dbReference type="GO" id="GO:0004346">
    <property type="term" value="F:glucose-6-phosphatase activity"/>
    <property type="evidence" value="ECO:0000314"/>
    <property type="project" value="MGI"/>
</dbReference>
<dbReference type="GO" id="GO:0006094">
    <property type="term" value="P:gluconeogenesis"/>
    <property type="evidence" value="ECO:0000314"/>
    <property type="project" value="MGI"/>
</dbReference>
<dbReference type="GO" id="GO:0051156">
    <property type="term" value="P:glucose 6-phosphate metabolic process"/>
    <property type="evidence" value="ECO:0007669"/>
    <property type="project" value="Ensembl"/>
</dbReference>
<dbReference type="GO" id="GO:0015760">
    <property type="term" value="P:glucose-6-phosphate transport"/>
    <property type="evidence" value="ECO:0000316"/>
    <property type="project" value="MGI"/>
</dbReference>
<dbReference type="CDD" id="cd03381">
    <property type="entry name" value="PAP2_glucose_6_phosphatase"/>
    <property type="match status" value="1"/>
</dbReference>
<dbReference type="FunFam" id="1.20.144.10:FF:000018">
    <property type="entry name" value="Glucose-6-phosphatase"/>
    <property type="match status" value="1"/>
</dbReference>
<dbReference type="Gene3D" id="1.20.144.10">
    <property type="entry name" value="Phosphatidic acid phosphatase type 2/haloperoxidase"/>
    <property type="match status" value="1"/>
</dbReference>
<dbReference type="InterPro" id="IPR016275">
    <property type="entry name" value="Glucose-6-phosphatase"/>
</dbReference>
<dbReference type="InterPro" id="IPR036938">
    <property type="entry name" value="P_Acid_Pase_2/haloperoxi_sf"/>
</dbReference>
<dbReference type="InterPro" id="IPR000326">
    <property type="entry name" value="P_Acid_Pase_2/haloperoxidase"/>
</dbReference>
<dbReference type="PANTHER" id="PTHR12591">
    <property type="entry name" value="GLUCOSE-6-PHOSPHATASE"/>
    <property type="match status" value="1"/>
</dbReference>
<dbReference type="PANTHER" id="PTHR12591:SF2">
    <property type="entry name" value="GLUCOSE-6-PHOSPHATASE 3"/>
    <property type="match status" value="1"/>
</dbReference>
<dbReference type="Pfam" id="PF01569">
    <property type="entry name" value="PAP2"/>
    <property type="match status" value="1"/>
</dbReference>
<dbReference type="PIRSF" id="PIRSF000905">
    <property type="entry name" value="Glucose-6-phosphatase"/>
    <property type="match status" value="1"/>
</dbReference>
<dbReference type="SMART" id="SM00014">
    <property type="entry name" value="acidPPc"/>
    <property type="match status" value="1"/>
</dbReference>
<dbReference type="SUPFAM" id="SSF48317">
    <property type="entry name" value="Acid phosphatase/Vanadium-dependent haloperoxidase"/>
    <property type="match status" value="1"/>
</dbReference>
<keyword id="KW-0256">Endoplasmic reticulum</keyword>
<keyword id="KW-0312">Gluconeogenesis</keyword>
<keyword id="KW-0378">Hydrolase</keyword>
<keyword id="KW-0472">Membrane</keyword>
<keyword id="KW-1185">Reference proteome</keyword>
<keyword id="KW-0812">Transmembrane</keyword>
<keyword id="KW-1133">Transmembrane helix</keyword>
<protein>
    <recommendedName>
        <fullName>Glucose-6-phosphatase 3</fullName>
        <shortName>G-6-Pase 3</shortName>
        <shortName>G6Pase 3</shortName>
        <ecNumber evidence="5">3.1.3.9</ecNumber>
    </recommendedName>
    <alternativeName>
        <fullName>Ubiquitous glucose-6-phosphatase catalytic subunit-related protein</fullName>
    </alternativeName>
    <alternativeName>
        <fullName evidence="8">glucose-6-phosphatase-beta</fullName>
        <shortName evidence="8">Glc-6-Pase-beta</shortName>
    </alternativeName>
</protein>
<feature type="chain" id="PRO_0000334513" description="Glucose-6-phosphatase 3">
    <location>
        <begin position="1"/>
        <end position="346"/>
    </location>
</feature>
<feature type="topological domain" description="Lumenal" evidence="2">
    <location>
        <begin position="1"/>
        <end position="24"/>
    </location>
</feature>
<feature type="transmembrane region" description="Helical" evidence="2">
    <location>
        <begin position="25"/>
        <end position="45"/>
    </location>
</feature>
<feature type="topological domain" description="Cytoplasmic" evidence="2">
    <location>
        <begin position="46"/>
        <end position="56"/>
    </location>
</feature>
<feature type="transmembrane region" description="Helical" evidence="2">
    <location>
        <begin position="57"/>
        <end position="77"/>
    </location>
</feature>
<feature type="topological domain" description="Lumenal" evidence="2">
    <location>
        <begin position="78"/>
        <end position="108"/>
    </location>
</feature>
<feature type="transmembrane region" description="Helical" evidence="2">
    <location>
        <begin position="109"/>
        <end position="129"/>
    </location>
</feature>
<feature type="topological domain" description="Cytoplasmic" evidence="2">
    <location>
        <begin position="130"/>
        <end position="138"/>
    </location>
</feature>
<feature type="transmembrane region" description="Helical" evidence="2">
    <location>
        <begin position="139"/>
        <end position="159"/>
    </location>
</feature>
<feature type="topological domain" description="Lumenal" evidence="2">
    <location>
        <begin position="160"/>
        <end position="167"/>
    </location>
</feature>
<feature type="transmembrane region" description="Helical" evidence="2">
    <location>
        <begin position="168"/>
        <end position="186"/>
    </location>
</feature>
<feature type="topological domain" description="Cytoplasmic" evidence="2">
    <location>
        <begin position="187"/>
        <end position="197"/>
    </location>
</feature>
<feature type="transmembrane region" description="Helical" evidence="2">
    <location>
        <begin position="198"/>
        <end position="218"/>
    </location>
</feature>
<feature type="topological domain" description="Lumenal" evidence="2">
    <location>
        <begin position="219"/>
        <end position="254"/>
    </location>
</feature>
<feature type="transmembrane region" description="Helical" evidence="2">
    <location>
        <begin position="255"/>
        <end position="273"/>
    </location>
</feature>
<feature type="topological domain" description="Cytoplasmic" evidence="2">
    <location>
        <begin position="274"/>
        <end position="283"/>
    </location>
</feature>
<feature type="transmembrane region" description="Helical" evidence="2">
    <location>
        <begin position="284"/>
        <end position="304"/>
    </location>
</feature>
<feature type="topological domain" description="Lumenal" evidence="2">
    <location>
        <begin position="305"/>
        <end position="307"/>
    </location>
</feature>
<feature type="transmembrane region" description="Helical" evidence="2">
    <location>
        <begin position="308"/>
        <end position="328"/>
    </location>
</feature>
<feature type="topological domain" description="Cytoplasmic" evidence="2">
    <location>
        <begin position="329"/>
        <end position="346"/>
    </location>
</feature>
<feature type="active site" description="Proton donor" evidence="2">
    <location>
        <position position="114"/>
    </location>
</feature>
<feature type="active site" description="Nucleophile" evidence="1">
    <location>
        <position position="167"/>
    </location>
</feature>
<feature type="binding site" evidence="2">
    <location>
        <position position="79"/>
    </location>
    <ligand>
        <name>substrate</name>
    </ligand>
</feature>
<feature type="binding site" evidence="2">
    <location>
        <position position="161"/>
    </location>
    <ligand>
        <name>substrate</name>
    </ligand>
</feature>
<feature type="sequence conflict" description="In Ref. 2; BAE38159." evidence="9" ref="2">
    <original>R</original>
    <variation>Q</variation>
    <location>
        <position position="136"/>
    </location>
</feature>
<feature type="sequence conflict" description="In Ref. 1; AAO39164." evidence="9" ref="1">
    <original>M</original>
    <variation>L</variation>
    <location>
        <position position="207"/>
    </location>
</feature>
<evidence type="ECO:0000250" key="1"/>
<evidence type="ECO:0000255" key="2"/>
<evidence type="ECO:0000269" key="3">
    <source>
    </source>
</evidence>
<evidence type="ECO:0000269" key="4">
    <source>
    </source>
</evidence>
<evidence type="ECO:0000269" key="5">
    <source>
    </source>
</evidence>
<evidence type="ECO:0000269" key="6">
    <source>
    </source>
</evidence>
<evidence type="ECO:0000269" key="7">
    <source>
    </source>
</evidence>
<evidence type="ECO:0000303" key="8">
    <source>
    </source>
</evidence>
<evidence type="ECO:0000305" key="9"/>
<comment type="function">
    <text evidence="4 5 6 7">Hydrolyzes glucose-6-phosphate to glucose in the endoplasmic reticulum. May form with the glucose-6-phosphate transporter (SLC37A4/G6PT) a ubiquitously expressed complex responsible for glucose production through glycogenolysis and gluconeogenesis. Probably required for normal neutrophil function.</text>
</comment>
<comment type="catalytic activity">
    <reaction evidence="5">
        <text>D-glucose 6-phosphate + H2O = D-glucose + phosphate</text>
        <dbReference type="Rhea" id="RHEA:16689"/>
        <dbReference type="ChEBI" id="CHEBI:4167"/>
        <dbReference type="ChEBI" id="CHEBI:15377"/>
        <dbReference type="ChEBI" id="CHEBI:43474"/>
        <dbReference type="ChEBI" id="CHEBI:61548"/>
        <dbReference type="EC" id="3.1.3.9"/>
    </reaction>
    <physiologicalReaction direction="left-to-right" evidence="5">
        <dbReference type="Rhea" id="RHEA:16690"/>
    </physiologicalReaction>
</comment>
<comment type="activity regulation">
    <text evidence="5">Inhibited by vanadate.</text>
</comment>
<comment type="biophysicochemical properties">
    <phDependence>
        <text evidence="5">Optimum pH is 6.5.</text>
    </phDependence>
    <temperatureDependence>
        <text evidence="5">Optimum temperature is 37 degrees Celsius.</text>
    </temperatureDependence>
</comment>
<comment type="pathway">
    <text>Carbohydrate biosynthesis; gluconeogenesis.</text>
</comment>
<comment type="subcellular location">
    <subcellularLocation>
        <location evidence="1">Endoplasmic reticulum membrane</location>
        <topology evidence="1">Multi-pass membrane protein</topology>
    </subcellularLocation>
</comment>
<comment type="tissue specificity">
    <text evidence="3 4 5">Widely expressed. Highly expressed in heart and testis and to a lower extent in spleen, stomach, small intestine, skeletal muscle and uterus. Expressed in muscle, brain, thymus, lung, kidney, spleen and pancreas (at protein level). In the brain, expressed in astrocytes (at protein level) (PubMed:15661744).</text>
</comment>
<comment type="disruption phenotype">
    <text evidence="6 7">Mice display reduced glucose-6-phosphate hydrolytic activity in the brain. No phenotypic difference was noted at birth but 4 months old female mice display growth retardation. Mutant mice exhibit a decreased plasma cholesterol concentration and an increased plasma glucagon concentration but no difference in blood glucose concentration (PubMed:17023421). Mice display neutropenia and neutrophil dysfunctions.</text>
</comment>
<comment type="similarity">
    <text evidence="9">Belongs to the glucose-6-phosphatase family.</text>
</comment>
<accession>Q6NSQ9</accession>
<accession>Q3TND0</accession>
<accession>Q811R8</accession>
<gene>
    <name type="primary">G6pc3</name>
    <name type="synonym">Ugrp</name>
</gene>
<name>G6PC3_MOUSE</name>
<sequence>MESTLSAGIIMAEALQNRLPGLENMWLWVTFLGDPKNLFQFCFPAAYYASRRLGISVLWITFIAEWLNLVFKWFLFGDRPFWWVHESGYSTQTPIQIHQFPSSCETGPGSPSGHCMITGAALWPVMTAISSQVASRSRSPWVRVIPGLAYCTFLLAVGLSRVFLLAHFPHQVLGGLIVGAALGWLMSPRVPMERELSFYGLTALALMLGASLMYWTLFTLGLDLSWSINLASKWCERPEWVHMDSRPFASLSRDSGSALGLGIALHTPCYAQIRRAHLGNGQKIACFVLAMGLLVFLEWLGYPPQISLFYIFNFLKYTLWPCLVLALVPWVVHTLSDQEAPPIRSS</sequence>
<reference key="1">
    <citation type="submission" date="2002-11" db="EMBL/GenBank/DDBJ databases">
        <title>Cloning of a glucose-6-phosphatase catalytic subunit-related sequence expressed in rodent tissues.</title>
        <authorList>
            <person name="Middleditch C."/>
            <person name="Darakhshan F."/>
            <person name="Bonnefont J."/>
            <person name="Guionie O."/>
            <person name="Burchell A."/>
            <person name="Clottes E."/>
        </authorList>
    </citation>
    <scope>NUCLEOTIDE SEQUENCE [MRNA]</scope>
    <source>
        <strain>CD-1</strain>
    </source>
</reference>
<reference key="2">
    <citation type="journal article" date="2005" name="Science">
        <title>The transcriptional landscape of the mammalian genome.</title>
        <authorList>
            <person name="Carninci P."/>
            <person name="Kasukawa T."/>
            <person name="Katayama S."/>
            <person name="Gough J."/>
            <person name="Frith M.C."/>
            <person name="Maeda N."/>
            <person name="Oyama R."/>
            <person name="Ravasi T."/>
            <person name="Lenhard B."/>
            <person name="Wells C."/>
            <person name="Kodzius R."/>
            <person name="Shimokawa K."/>
            <person name="Bajic V.B."/>
            <person name="Brenner S.E."/>
            <person name="Batalov S."/>
            <person name="Forrest A.R."/>
            <person name="Zavolan M."/>
            <person name="Davis M.J."/>
            <person name="Wilming L.G."/>
            <person name="Aidinis V."/>
            <person name="Allen J.E."/>
            <person name="Ambesi-Impiombato A."/>
            <person name="Apweiler R."/>
            <person name="Aturaliya R.N."/>
            <person name="Bailey T.L."/>
            <person name="Bansal M."/>
            <person name="Baxter L."/>
            <person name="Beisel K.W."/>
            <person name="Bersano T."/>
            <person name="Bono H."/>
            <person name="Chalk A.M."/>
            <person name="Chiu K.P."/>
            <person name="Choudhary V."/>
            <person name="Christoffels A."/>
            <person name="Clutterbuck D.R."/>
            <person name="Crowe M.L."/>
            <person name="Dalla E."/>
            <person name="Dalrymple B.P."/>
            <person name="de Bono B."/>
            <person name="Della Gatta G."/>
            <person name="di Bernardo D."/>
            <person name="Down T."/>
            <person name="Engstrom P."/>
            <person name="Fagiolini M."/>
            <person name="Faulkner G."/>
            <person name="Fletcher C.F."/>
            <person name="Fukushima T."/>
            <person name="Furuno M."/>
            <person name="Futaki S."/>
            <person name="Gariboldi M."/>
            <person name="Georgii-Hemming P."/>
            <person name="Gingeras T.R."/>
            <person name="Gojobori T."/>
            <person name="Green R.E."/>
            <person name="Gustincich S."/>
            <person name="Harbers M."/>
            <person name="Hayashi Y."/>
            <person name="Hensch T.K."/>
            <person name="Hirokawa N."/>
            <person name="Hill D."/>
            <person name="Huminiecki L."/>
            <person name="Iacono M."/>
            <person name="Ikeo K."/>
            <person name="Iwama A."/>
            <person name="Ishikawa T."/>
            <person name="Jakt M."/>
            <person name="Kanapin A."/>
            <person name="Katoh M."/>
            <person name="Kawasawa Y."/>
            <person name="Kelso J."/>
            <person name="Kitamura H."/>
            <person name="Kitano H."/>
            <person name="Kollias G."/>
            <person name="Krishnan S.P."/>
            <person name="Kruger A."/>
            <person name="Kummerfeld S.K."/>
            <person name="Kurochkin I.V."/>
            <person name="Lareau L.F."/>
            <person name="Lazarevic D."/>
            <person name="Lipovich L."/>
            <person name="Liu J."/>
            <person name="Liuni S."/>
            <person name="McWilliam S."/>
            <person name="Madan Babu M."/>
            <person name="Madera M."/>
            <person name="Marchionni L."/>
            <person name="Matsuda H."/>
            <person name="Matsuzawa S."/>
            <person name="Miki H."/>
            <person name="Mignone F."/>
            <person name="Miyake S."/>
            <person name="Morris K."/>
            <person name="Mottagui-Tabar S."/>
            <person name="Mulder N."/>
            <person name="Nakano N."/>
            <person name="Nakauchi H."/>
            <person name="Ng P."/>
            <person name="Nilsson R."/>
            <person name="Nishiguchi S."/>
            <person name="Nishikawa S."/>
            <person name="Nori F."/>
            <person name="Ohara O."/>
            <person name="Okazaki Y."/>
            <person name="Orlando V."/>
            <person name="Pang K.C."/>
            <person name="Pavan W.J."/>
            <person name="Pavesi G."/>
            <person name="Pesole G."/>
            <person name="Petrovsky N."/>
            <person name="Piazza S."/>
            <person name="Reed J."/>
            <person name="Reid J.F."/>
            <person name="Ring B.Z."/>
            <person name="Ringwald M."/>
            <person name="Rost B."/>
            <person name="Ruan Y."/>
            <person name="Salzberg S.L."/>
            <person name="Sandelin A."/>
            <person name="Schneider C."/>
            <person name="Schoenbach C."/>
            <person name="Sekiguchi K."/>
            <person name="Semple C.A."/>
            <person name="Seno S."/>
            <person name="Sessa L."/>
            <person name="Sheng Y."/>
            <person name="Shibata Y."/>
            <person name="Shimada H."/>
            <person name="Shimada K."/>
            <person name="Silva D."/>
            <person name="Sinclair B."/>
            <person name="Sperling S."/>
            <person name="Stupka E."/>
            <person name="Sugiura K."/>
            <person name="Sultana R."/>
            <person name="Takenaka Y."/>
            <person name="Taki K."/>
            <person name="Tammoja K."/>
            <person name="Tan S.L."/>
            <person name="Tang S."/>
            <person name="Taylor M.S."/>
            <person name="Tegner J."/>
            <person name="Teichmann S.A."/>
            <person name="Ueda H.R."/>
            <person name="van Nimwegen E."/>
            <person name="Verardo R."/>
            <person name="Wei C.L."/>
            <person name="Yagi K."/>
            <person name="Yamanishi H."/>
            <person name="Zabarovsky E."/>
            <person name="Zhu S."/>
            <person name="Zimmer A."/>
            <person name="Hide W."/>
            <person name="Bult C."/>
            <person name="Grimmond S.M."/>
            <person name="Teasdale R.D."/>
            <person name="Liu E.T."/>
            <person name="Brusic V."/>
            <person name="Quackenbush J."/>
            <person name="Wahlestedt C."/>
            <person name="Mattick J.S."/>
            <person name="Hume D.A."/>
            <person name="Kai C."/>
            <person name="Sasaki D."/>
            <person name="Tomaru Y."/>
            <person name="Fukuda S."/>
            <person name="Kanamori-Katayama M."/>
            <person name="Suzuki M."/>
            <person name="Aoki J."/>
            <person name="Arakawa T."/>
            <person name="Iida J."/>
            <person name="Imamura K."/>
            <person name="Itoh M."/>
            <person name="Kato T."/>
            <person name="Kawaji H."/>
            <person name="Kawagashira N."/>
            <person name="Kawashima T."/>
            <person name="Kojima M."/>
            <person name="Kondo S."/>
            <person name="Konno H."/>
            <person name="Nakano K."/>
            <person name="Ninomiya N."/>
            <person name="Nishio T."/>
            <person name="Okada M."/>
            <person name="Plessy C."/>
            <person name="Shibata K."/>
            <person name="Shiraki T."/>
            <person name="Suzuki S."/>
            <person name="Tagami M."/>
            <person name="Waki K."/>
            <person name="Watahiki A."/>
            <person name="Okamura-Oho Y."/>
            <person name="Suzuki H."/>
            <person name="Kawai J."/>
            <person name="Hayashizaki Y."/>
        </authorList>
    </citation>
    <scope>NUCLEOTIDE SEQUENCE [LARGE SCALE MRNA]</scope>
    <source>
        <strain>C57BL/6J</strain>
        <tissue>Kidney</tissue>
    </source>
</reference>
<reference key="3">
    <citation type="journal article" date="2009" name="PLoS Biol.">
        <title>Lineage-specific biology revealed by a finished genome assembly of the mouse.</title>
        <authorList>
            <person name="Church D.M."/>
            <person name="Goodstadt L."/>
            <person name="Hillier L.W."/>
            <person name="Zody M.C."/>
            <person name="Goldstein S."/>
            <person name="She X."/>
            <person name="Bult C.J."/>
            <person name="Agarwala R."/>
            <person name="Cherry J.L."/>
            <person name="DiCuccio M."/>
            <person name="Hlavina W."/>
            <person name="Kapustin Y."/>
            <person name="Meric P."/>
            <person name="Maglott D."/>
            <person name="Birtle Z."/>
            <person name="Marques A.C."/>
            <person name="Graves T."/>
            <person name="Zhou S."/>
            <person name="Teague B."/>
            <person name="Potamousis K."/>
            <person name="Churas C."/>
            <person name="Place M."/>
            <person name="Herschleb J."/>
            <person name="Runnheim R."/>
            <person name="Forrest D."/>
            <person name="Amos-Landgraf J."/>
            <person name="Schwartz D.C."/>
            <person name="Cheng Z."/>
            <person name="Lindblad-Toh K."/>
            <person name="Eichler E.E."/>
            <person name="Ponting C.P."/>
        </authorList>
    </citation>
    <scope>NUCLEOTIDE SEQUENCE [LARGE SCALE GENOMIC DNA]</scope>
    <source>
        <strain>C57BL/6J</strain>
    </source>
</reference>
<reference key="4">
    <citation type="journal article" date="2004" name="Genome Res.">
        <title>The status, quality, and expansion of the NIH full-length cDNA project: the Mammalian Gene Collection (MGC).</title>
        <authorList>
            <consortium name="The MGC Project Team"/>
        </authorList>
    </citation>
    <scope>NUCLEOTIDE SEQUENCE [LARGE SCALE MRNA]</scope>
    <source>
        <strain>FVB/N</strain>
        <tissue>Colon</tissue>
    </source>
</reference>
<reference key="5">
    <citation type="journal article" date="2004" name="J. Biol. Chem.">
        <title>A potential new role for muscle in blood glucose homeostasis.</title>
        <authorList>
            <person name="Shieh J.-J."/>
            <person name="Pan C.-J."/>
            <person name="Mansfield B.C."/>
            <person name="Chou J.Y."/>
        </authorList>
    </citation>
    <scope>FUNCTION</scope>
    <scope>TISSUE SPECIFICITY</scope>
</reference>
<reference key="6">
    <citation type="journal article" date="2004" name="J. Mol. Endocrinol.">
        <title>Identification and characterization of a cDNA and the gene encoding the mouse ubiquitously expressed glucose-6-phosphatase catalytic subunit-related protein.</title>
        <authorList>
            <person name="Boustead J.N."/>
            <person name="Martin C.C."/>
            <person name="Oeser J.K."/>
            <person name="Svitek C.A."/>
            <person name="Hunter S.I."/>
            <person name="Hutton J.C."/>
            <person name="O'Brien R.M."/>
        </authorList>
    </citation>
    <scope>IDENTIFICATION</scope>
    <scope>TISSUE SPECIFICITY</scope>
</reference>
<reference key="7">
    <citation type="journal article" date="2005" name="J. Biol. Chem.">
        <title>Brain contains a functional glucose-6-phosphatase complex capable of endogenous glucose production.</title>
        <authorList>
            <person name="Ghosh A."/>
            <person name="Cheung Y.Y."/>
            <person name="Mansfield B.C."/>
            <person name="Chou J.Y."/>
        </authorList>
    </citation>
    <scope>FUNCTION</scope>
    <scope>CATALYTIC ACTIVITY</scope>
    <scope>BIOPHYSICOCHEMICAL PROPERTIES</scope>
    <scope>ACTIVITY REGULATION</scope>
    <scope>TISSUE SPECIFICITY</scope>
</reference>
<reference key="8">
    <citation type="journal article" date="2006" name="J. Biol. Chem.">
        <title>Deletion of the gene encoding the ubiquitously expressed glucose-6-phosphatase catalytic subunit-related protein (UGRP)/glucose-6-phosphatase catalytic subunit-beta results in lowered plasma cholesterol and elevated glucagon.</title>
        <authorList>
            <person name="Wang Y."/>
            <person name="Oeser J.K."/>
            <person name="Yang C."/>
            <person name="Sarkar S."/>
            <person name="Hackl S.I."/>
            <person name="Hasty A.H."/>
            <person name="McGuinness O.P."/>
            <person name="Paradee W."/>
            <person name="Hutton J.C."/>
            <person name="Powell D.R."/>
            <person name="O'Brien R.M."/>
        </authorList>
    </citation>
    <scope>FUNCTION</scope>
    <scope>DISRUPTION PHENOTYPE</scope>
</reference>
<reference key="9">
    <citation type="journal article" date="2007" name="J. Clin. Invest.">
        <title>Impaired neutrophil activity and increased susceptibility to bacterial infection in mice lacking glucose-6-phosphatase-beta.</title>
        <authorList>
            <person name="Cheung Y.Y."/>
            <person name="Kim S.Y."/>
            <person name="Yiu W.H."/>
            <person name="Pan C.-J."/>
            <person name="Jun H.-S."/>
            <person name="Ruef R.A."/>
            <person name="Lee E.J."/>
            <person name="Westphal H."/>
            <person name="Mansfield B.C."/>
            <person name="Chou J.Y."/>
        </authorList>
    </citation>
    <scope>FUNCTION</scope>
    <scope>DISRUPTION PHENOTYPE</scope>
</reference>
<reference key="10">
    <citation type="journal article" date="2010" name="Cell">
        <title>A tissue-specific atlas of mouse protein phosphorylation and expression.</title>
        <authorList>
            <person name="Huttlin E.L."/>
            <person name="Jedrychowski M.P."/>
            <person name="Elias J.E."/>
            <person name="Goswami T."/>
            <person name="Rad R."/>
            <person name="Beausoleil S.A."/>
            <person name="Villen J."/>
            <person name="Haas W."/>
            <person name="Sowa M.E."/>
            <person name="Gygi S.P."/>
        </authorList>
    </citation>
    <scope>IDENTIFICATION BY MASS SPECTROMETRY [LARGE SCALE ANALYSIS]</scope>
    <source>
        <tissue>Brain</tissue>
        <tissue>Heart</tissue>
        <tissue>Kidney</tissue>
        <tissue>Spleen</tissue>
        <tissue>Testis</tissue>
    </source>
</reference>